<organism>
    <name type="scientific">Solidesulfovibrio magneticus (strain ATCC 700980 / DSM 13731 / RS-1)</name>
    <name type="common">Desulfovibrio magneticus</name>
    <dbReference type="NCBI Taxonomy" id="573370"/>
    <lineage>
        <taxon>Bacteria</taxon>
        <taxon>Pseudomonadati</taxon>
        <taxon>Thermodesulfobacteriota</taxon>
        <taxon>Desulfovibrionia</taxon>
        <taxon>Desulfovibrionales</taxon>
        <taxon>Desulfovibrionaceae</taxon>
        <taxon>Solidesulfovibrio</taxon>
    </lineage>
</organism>
<accession>C4XMB3</accession>
<proteinExistence type="inferred from homology"/>
<reference key="1">
    <citation type="journal article" date="2009" name="Genome Res.">
        <title>Whole genome sequence of Desulfovibrio magneticus strain RS-1 revealed common gene clusters in magnetotactic bacteria.</title>
        <authorList>
            <person name="Nakazawa H."/>
            <person name="Arakaki A."/>
            <person name="Narita-Yamada S."/>
            <person name="Yashiro I."/>
            <person name="Jinno K."/>
            <person name="Aoki N."/>
            <person name="Tsuruyama A."/>
            <person name="Okamura Y."/>
            <person name="Tanikawa S."/>
            <person name="Fujita N."/>
            <person name="Takeyama H."/>
            <person name="Matsunaga T."/>
        </authorList>
    </citation>
    <scope>NUCLEOTIDE SEQUENCE [LARGE SCALE GENOMIC DNA]</scope>
    <source>
        <strain>ATCC 700980 / DSM 13731 / RS-1</strain>
    </source>
</reference>
<name>PURT_SOLM1</name>
<comment type="function">
    <text evidence="1">Involved in the de novo purine biosynthesis. Catalyzes the transfer of formate to 5-phospho-ribosyl-glycinamide (GAR), producing 5-phospho-ribosyl-N-formylglycinamide (FGAR). Formate is provided by PurU via hydrolysis of 10-formyl-tetrahydrofolate.</text>
</comment>
<comment type="catalytic activity">
    <reaction evidence="1">
        <text>N(1)-(5-phospho-beta-D-ribosyl)glycinamide + formate + ATP = N(2)-formyl-N(1)-(5-phospho-beta-D-ribosyl)glycinamide + ADP + phosphate + H(+)</text>
        <dbReference type="Rhea" id="RHEA:24829"/>
        <dbReference type="ChEBI" id="CHEBI:15378"/>
        <dbReference type="ChEBI" id="CHEBI:15740"/>
        <dbReference type="ChEBI" id="CHEBI:30616"/>
        <dbReference type="ChEBI" id="CHEBI:43474"/>
        <dbReference type="ChEBI" id="CHEBI:143788"/>
        <dbReference type="ChEBI" id="CHEBI:147286"/>
        <dbReference type="ChEBI" id="CHEBI:456216"/>
        <dbReference type="EC" id="6.3.1.21"/>
    </reaction>
    <physiologicalReaction direction="left-to-right" evidence="1">
        <dbReference type="Rhea" id="RHEA:24830"/>
    </physiologicalReaction>
</comment>
<comment type="pathway">
    <text evidence="1">Purine metabolism; IMP biosynthesis via de novo pathway; N(2)-formyl-N(1)-(5-phospho-D-ribosyl)glycinamide from N(1)-(5-phospho-D-ribosyl)glycinamide (formate route): step 1/1.</text>
</comment>
<comment type="subunit">
    <text evidence="1">Homodimer.</text>
</comment>
<comment type="similarity">
    <text evidence="1">Belongs to the PurK/PurT family.</text>
</comment>
<gene>
    <name evidence="1" type="primary">purT</name>
    <name type="ordered locus">DMR_37500</name>
</gene>
<protein>
    <recommendedName>
        <fullName evidence="1">Formate-dependent phosphoribosylglycinamide formyltransferase</fullName>
        <ecNumber evidence="1">6.3.1.21</ecNumber>
    </recommendedName>
    <alternativeName>
        <fullName evidence="1">5'-phosphoribosylglycinamide transformylase 2</fullName>
    </alternativeName>
    <alternativeName>
        <fullName evidence="1">Formate-dependent GAR transformylase</fullName>
    </alternativeName>
    <alternativeName>
        <fullName evidence="1">GAR transformylase 2</fullName>
        <shortName evidence="1">GART 2</shortName>
    </alternativeName>
    <alternativeName>
        <fullName evidence="1">Non-folate glycinamide ribonucleotide transformylase</fullName>
    </alternativeName>
    <alternativeName>
        <fullName evidence="1">Phosphoribosylglycinamide formyltransferase 2</fullName>
    </alternativeName>
</protein>
<feature type="chain" id="PRO_1000215835" description="Formate-dependent phosphoribosylglycinamide formyltransferase">
    <location>
        <begin position="1"/>
        <end position="393"/>
    </location>
</feature>
<feature type="domain" description="ATP-grasp" evidence="1">
    <location>
        <begin position="119"/>
        <end position="308"/>
    </location>
</feature>
<feature type="binding site" evidence="1">
    <location>
        <begin position="22"/>
        <end position="23"/>
    </location>
    <ligand>
        <name>N(1)-(5-phospho-beta-D-ribosyl)glycinamide</name>
        <dbReference type="ChEBI" id="CHEBI:143788"/>
    </ligand>
</feature>
<feature type="binding site" evidence="1">
    <location>
        <position position="82"/>
    </location>
    <ligand>
        <name>N(1)-(5-phospho-beta-D-ribosyl)glycinamide</name>
        <dbReference type="ChEBI" id="CHEBI:143788"/>
    </ligand>
</feature>
<feature type="binding site" evidence="1">
    <location>
        <position position="114"/>
    </location>
    <ligand>
        <name>ATP</name>
        <dbReference type="ChEBI" id="CHEBI:30616"/>
    </ligand>
</feature>
<feature type="binding site" evidence="1">
    <location>
        <position position="155"/>
    </location>
    <ligand>
        <name>ATP</name>
        <dbReference type="ChEBI" id="CHEBI:30616"/>
    </ligand>
</feature>
<feature type="binding site" evidence="1">
    <location>
        <begin position="160"/>
        <end position="165"/>
    </location>
    <ligand>
        <name>ATP</name>
        <dbReference type="ChEBI" id="CHEBI:30616"/>
    </ligand>
</feature>
<feature type="binding site" evidence="1">
    <location>
        <begin position="195"/>
        <end position="198"/>
    </location>
    <ligand>
        <name>ATP</name>
        <dbReference type="ChEBI" id="CHEBI:30616"/>
    </ligand>
</feature>
<feature type="binding site" evidence="1">
    <location>
        <position position="203"/>
    </location>
    <ligand>
        <name>ATP</name>
        <dbReference type="ChEBI" id="CHEBI:30616"/>
    </ligand>
</feature>
<feature type="binding site" evidence="1">
    <location>
        <position position="267"/>
    </location>
    <ligand>
        <name>Mg(2+)</name>
        <dbReference type="ChEBI" id="CHEBI:18420"/>
    </ligand>
</feature>
<feature type="binding site" evidence="1">
    <location>
        <position position="279"/>
    </location>
    <ligand>
        <name>Mg(2+)</name>
        <dbReference type="ChEBI" id="CHEBI:18420"/>
    </ligand>
</feature>
<feature type="binding site" evidence="1">
    <location>
        <position position="286"/>
    </location>
    <ligand>
        <name>N(1)-(5-phospho-beta-D-ribosyl)glycinamide</name>
        <dbReference type="ChEBI" id="CHEBI:143788"/>
    </ligand>
</feature>
<feature type="binding site" evidence="1">
    <location>
        <position position="356"/>
    </location>
    <ligand>
        <name>N(1)-(5-phospho-beta-D-ribosyl)glycinamide</name>
        <dbReference type="ChEBI" id="CHEBI:143788"/>
    </ligand>
</feature>
<feature type="binding site" evidence="1">
    <location>
        <begin position="363"/>
        <end position="364"/>
    </location>
    <ligand>
        <name>N(1)-(5-phospho-beta-D-ribosyl)glycinamide</name>
        <dbReference type="ChEBI" id="CHEBI:143788"/>
    </ligand>
</feature>
<sequence length="393" mass="41749">MTTIGTPLTASATKILLLGSGELGKEVAIEAQRLGVEVIAVDRYPNAPAMQVAHRRHVVSMLDAPALRSIIEAEKPDYIVPEIEAIATEELIKLEAEGYPVVPTARAARLTMDREGIRRLAAEELGLVTSPYRFADTREEFLAACDAVGFPCVVKPVMSSSGKGQSVARDAASAEASWDYAQTAGRAGAGRVIVEGFVDFDYEITLLTVRHAGGTSFCAPIGHRQEKGDYRESWQPHPMSQSALAKAQAMAGAVTEALGGRGIFGVELFIKGDAVIFSEVSPRPHDTGMVTLISQDLSEFALHVRAILGLPIPAIRLYGPAASRVILGEGDSTSPRFAIDPAALAQPDTAIKLFGKPELHGTRRLGVALALGRDVEEAKAKAIAAASHVKVEL</sequence>
<keyword id="KW-0067">ATP-binding</keyword>
<keyword id="KW-0436">Ligase</keyword>
<keyword id="KW-0460">Magnesium</keyword>
<keyword id="KW-0479">Metal-binding</keyword>
<keyword id="KW-0547">Nucleotide-binding</keyword>
<keyword id="KW-0658">Purine biosynthesis</keyword>
<dbReference type="EC" id="6.3.1.21" evidence="1"/>
<dbReference type="EMBL" id="AP010904">
    <property type="protein sequence ID" value="BAH77241.1"/>
    <property type="molecule type" value="Genomic_DNA"/>
</dbReference>
<dbReference type="RefSeq" id="WP_015862382.1">
    <property type="nucleotide sequence ID" value="NC_012796.1"/>
</dbReference>
<dbReference type="SMR" id="C4XMB3"/>
<dbReference type="STRING" id="573370.DMR_37500"/>
<dbReference type="KEGG" id="dma:DMR_37500"/>
<dbReference type="eggNOG" id="COG0027">
    <property type="taxonomic scope" value="Bacteria"/>
</dbReference>
<dbReference type="HOGENOM" id="CLU_011534_1_3_7"/>
<dbReference type="OrthoDB" id="9804625at2"/>
<dbReference type="UniPathway" id="UPA00074">
    <property type="reaction ID" value="UER00127"/>
</dbReference>
<dbReference type="Proteomes" id="UP000009071">
    <property type="component" value="Chromosome"/>
</dbReference>
<dbReference type="GO" id="GO:0005829">
    <property type="term" value="C:cytosol"/>
    <property type="evidence" value="ECO:0007669"/>
    <property type="project" value="TreeGrafter"/>
</dbReference>
<dbReference type="GO" id="GO:0005524">
    <property type="term" value="F:ATP binding"/>
    <property type="evidence" value="ECO:0007669"/>
    <property type="project" value="UniProtKB-UniRule"/>
</dbReference>
<dbReference type="GO" id="GO:0000287">
    <property type="term" value="F:magnesium ion binding"/>
    <property type="evidence" value="ECO:0007669"/>
    <property type="project" value="InterPro"/>
</dbReference>
<dbReference type="GO" id="GO:0043815">
    <property type="term" value="F:phosphoribosylglycinamide formyltransferase 2 activity"/>
    <property type="evidence" value="ECO:0007669"/>
    <property type="project" value="UniProtKB-UniRule"/>
</dbReference>
<dbReference type="GO" id="GO:0004644">
    <property type="term" value="F:phosphoribosylglycinamide formyltransferase activity"/>
    <property type="evidence" value="ECO:0007669"/>
    <property type="project" value="InterPro"/>
</dbReference>
<dbReference type="GO" id="GO:0006189">
    <property type="term" value="P:'de novo' IMP biosynthetic process"/>
    <property type="evidence" value="ECO:0007669"/>
    <property type="project" value="UniProtKB-UniRule"/>
</dbReference>
<dbReference type="FunFam" id="3.30.1490.20:FF:000013">
    <property type="entry name" value="Formate-dependent phosphoribosylglycinamide formyltransferase"/>
    <property type="match status" value="1"/>
</dbReference>
<dbReference type="FunFam" id="3.30.470.20:FF:000027">
    <property type="entry name" value="Formate-dependent phosphoribosylglycinamide formyltransferase"/>
    <property type="match status" value="1"/>
</dbReference>
<dbReference type="FunFam" id="3.40.50.20:FF:000007">
    <property type="entry name" value="Formate-dependent phosphoribosylglycinamide formyltransferase"/>
    <property type="match status" value="1"/>
</dbReference>
<dbReference type="Gene3D" id="3.40.50.20">
    <property type="match status" value="1"/>
</dbReference>
<dbReference type="Gene3D" id="3.30.1490.20">
    <property type="entry name" value="ATP-grasp fold, A domain"/>
    <property type="match status" value="1"/>
</dbReference>
<dbReference type="Gene3D" id="3.30.470.20">
    <property type="entry name" value="ATP-grasp fold, B domain"/>
    <property type="match status" value="1"/>
</dbReference>
<dbReference type="HAMAP" id="MF_01643">
    <property type="entry name" value="PurT"/>
    <property type="match status" value="1"/>
</dbReference>
<dbReference type="InterPro" id="IPR011761">
    <property type="entry name" value="ATP-grasp"/>
</dbReference>
<dbReference type="InterPro" id="IPR003135">
    <property type="entry name" value="ATP-grasp_carboxylate-amine"/>
</dbReference>
<dbReference type="InterPro" id="IPR013815">
    <property type="entry name" value="ATP_grasp_subdomain_1"/>
</dbReference>
<dbReference type="InterPro" id="IPR016185">
    <property type="entry name" value="PreATP-grasp_dom_sf"/>
</dbReference>
<dbReference type="InterPro" id="IPR005862">
    <property type="entry name" value="PurT"/>
</dbReference>
<dbReference type="InterPro" id="IPR054350">
    <property type="entry name" value="PurT/PurK_preATP-grasp"/>
</dbReference>
<dbReference type="InterPro" id="IPR048740">
    <property type="entry name" value="PurT_C"/>
</dbReference>
<dbReference type="NCBIfam" id="NF006766">
    <property type="entry name" value="PRK09288.1"/>
    <property type="match status" value="1"/>
</dbReference>
<dbReference type="NCBIfam" id="TIGR01142">
    <property type="entry name" value="purT"/>
    <property type="match status" value="1"/>
</dbReference>
<dbReference type="PANTHER" id="PTHR43055">
    <property type="entry name" value="FORMATE-DEPENDENT PHOSPHORIBOSYLGLYCINAMIDE FORMYLTRANSFERASE"/>
    <property type="match status" value="1"/>
</dbReference>
<dbReference type="PANTHER" id="PTHR43055:SF1">
    <property type="entry name" value="FORMATE-DEPENDENT PHOSPHORIBOSYLGLYCINAMIDE FORMYLTRANSFERASE"/>
    <property type="match status" value="1"/>
</dbReference>
<dbReference type="Pfam" id="PF02222">
    <property type="entry name" value="ATP-grasp"/>
    <property type="match status" value="1"/>
</dbReference>
<dbReference type="Pfam" id="PF21244">
    <property type="entry name" value="PurT_C"/>
    <property type="match status" value="1"/>
</dbReference>
<dbReference type="Pfam" id="PF22660">
    <property type="entry name" value="RS_preATP-grasp-like"/>
    <property type="match status" value="1"/>
</dbReference>
<dbReference type="SUPFAM" id="SSF56059">
    <property type="entry name" value="Glutathione synthetase ATP-binding domain-like"/>
    <property type="match status" value="1"/>
</dbReference>
<dbReference type="SUPFAM" id="SSF52440">
    <property type="entry name" value="PreATP-grasp domain"/>
    <property type="match status" value="1"/>
</dbReference>
<dbReference type="PROSITE" id="PS50975">
    <property type="entry name" value="ATP_GRASP"/>
    <property type="match status" value="1"/>
</dbReference>
<evidence type="ECO:0000255" key="1">
    <source>
        <dbReference type="HAMAP-Rule" id="MF_01643"/>
    </source>
</evidence>